<name>THIE_BORPA</name>
<protein>
    <recommendedName>
        <fullName evidence="1">Thiamine-phosphate synthase</fullName>
        <shortName evidence="1">TP synthase</shortName>
        <shortName evidence="1">TPS</shortName>
        <ecNumber evidence="1">2.5.1.3</ecNumber>
    </recommendedName>
    <alternativeName>
        <fullName evidence="1">Thiamine-phosphate pyrophosphorylase</fullName>
        <shortName evidence="1">TMP pyrophosphorylase</shortName>
        <shortName evidence="1">TMP-PPase</shortName>
    </alternativeName>
</protein>
<gene>
    <name evidence="1" type="primary">thiE</name>
    <name type="ordered locus">BPP3935</name>
</gene>
<dbReference type="EC" id="2.5.1.3" evidence="1"/>
<dbReference type="EMBL" id="BX640435">
    <property type="protein sequence ID" value="CAE39218.1"/>
    <property type="molecule type" value="Genomic_DNA"/>
</dbReference>
<dbReference type="RefSeq" id="WP_003814984.1">
    <property type="nucleotide sequence ID" value="NC_002928.3"/>
</dbReference>
<dbReference type="SMR" id="Q7W3U2"/>
<dbReference type="GeneID" id="69603432"/>
<dbReference type="GeneID" id="93205734"/>
<dbReference type="KEGG" id="bpa:BPP3935"/>
<dbReference type="HOGENOM" id="CLU_018272_3_1_4"/>
<dbReference type="UniPathway" id="UPA00060">
    <property type="reaction ID" value="UER00141"/>
</dbReference>
<dbReference type="Proteomes" id="UP000001421">
    <property type="component" value="Chromosome"/>
</dbReference>
<dbReference type="GO" id="GO:0005737">
    <property type="term" value="C:cytoplasm"/>
    <property type="evidence" value="ECO:0007669"/>
    <property type="project" value="TreeGrafter"/>
</dbReference>
<dbReference type="GO" id="GO:0000287">
    <property type="term" value="F:magnesium ion binding"/>
    <property type="evidence" value="ECO:0007669"/>
    <property type="project" value="UniProtKB-UniRule"/>
</dbReference>
<dbReference type="GO" id="GO:0004789">
    <property type="term" value="F:thiamine-phosphate diphosphorylase activity"/>
    <property type="evidence" value="ECO:0007669"/>
    <property type="project" value="UniProtKB-UniRule"/>
</dbReference>
<dbReference type="GO" id="GO:0009228">
    <property type="term" value="P:thiamine biosynthetic process"/>
    <property type="evidence" value="ECO:0007669"/>
    <property type="project" value="UniProtKB-KW"/>
</dbReference>
<dbReference type="GO" id="GO:0009229">
    <property type="term" value="P:thiamine diphosphate biosynthetic process"/>
    <property type="evidence" value="ECO:0007669"/>
    <property type="project" value="UniProtKB-UniRule"/>
</dbReference>
<dbReference type="CDD" id="cd00564">
    <property type="entry name" value="TMP_TenI"/>
    <property type="match status" value="1"/>
</dbReference>
<dbReference type="Gene3D" id="3.20.20.70">
    <property type="entry name" value="Aldolase class I"/>
    <property type="match status" value="1"/>
</dbReference>
<dbReference type="HAMAP" id="MF_00097">
    <property type="entry name" value="TMP_synthase"/>
    <property type="match status" value="1"/>
</dbReference>
<dbReference type="InterPro" id="IPR013785">
    <property type="entry name" value="Aldolase_TIM"/>
</dbReference>
<dbReference type="InterPro" id="IPR036206">
    <property type="entry name" value="ThiamineP_synth_sf"/>
</dbReference>
<dbReference type="InterPro" id="IPR022998">
    <property type="entry name" value="ThiamineP_synth_TenI"/>
</dbReference>
<dbReference type="InterPro" id="IPR034291">
    <property type="entry name" value="TMP_synthase"/>
</dbReference>
<dbReference type="NCBIfam" id="TIGR00693">
    <property type="entry name" value="thiE"/>
    <property type="match status" value="1"/>
</dbReference>
<dbReference type="PANTHER" id="PTHR20857">
    <property type="entry name" value="THIAMINE-PHOSPHATE PYROPHOSPHORYLASE"/>
    <property type="match status" value="1"/>
</dbReference>
<dbReference type="PANTHER" id="PTHR20857:SF15">
    <property type="entry name" value="THIAMINE-PHOSPHATE SYNTHASE"/>
    <property type="match status" value="1"/>
</dbReference>
<dbReference type="Pfam" id="PF02581">
    <property type="entry name" value="TMP-TENI"/>
    <property type="match status" value="1"/>
</dbReference>
<dbReference type="SUPFAM" id="SSF51391">
    <property type="entry name" value="Thiamin phosphate synthase"/>
    <property type="match status" value="1"/>
</dbReference>
<accession>Q7W3U2</accession>
<keyword id="KW-0460">Magnesium</keyword>
<keyword id="KW-0479">Metal-binding</keyword>
<keyword id="KW-0784">Thiamine biosynthesis</keyword>
<keyword id="KW-0808">Transferase</keyword>
<evidence type="ECO:0000255" key="1">
    <source>
        <dbReference type="HAMAP-Rule" id="MF_00097"/>
    </source>
</evidence>
<proteinExistence type="inferred from homology"/>
<feature type="chain" id="PRO_0000156998" description="Thiamine-phosphate synthase">
    <location>
        <begin position="1"/>
        <end position="217"/>
    </location>
</feature>
<feature type="binding site" evidence="1">
    <location>
        <begin position="39"/>
        <end position="43"/>
    </location>
    <ligand>
        <name>4-amino-2-methyl-5-(diphosphooxymethyl)pyrimidine</name>
        <dbReference type="ChEBI" id="CHEBI:57841"/>
    </ligand>
</feature>
<feature type="binding site" evidence="1">
    <location>
        <position position="71"/>
    </location>
    <ligand>
        <name>4-amino-2-methyl-5-(diphosphooxymethyl)pyrimidine</name>
        <dbReference type="ChEBI" id="CHEBI:57841"/>
    </ligand>
</feature>
<feature type="binding site" evidence="1">
    <location>
        <position position="72"/>
    </location>
    <ligand>
        <name>Mg(2+)</name>
        <dbReference type="ChEBI" id="CHEBI:18420"/>
    </ligand>
</feature>
<feature type="binding site" evidence="1">
    <location>
        <position position="91"/>
    </location>
    <ligand>
        <name>Mg(2+)</name>
        <dbReference type="ChEBI" id="CHEBI:18420"/>
    </ligand>
</feature>
<feature type="binding site" evidence="1">
    <location>
        <position position="110"/>
    </location>
    <ligand>
        <name>4-amino-2-methyl-5-(diphosphooxymethyl)pyrimidine</name>
        <dbReference type="ChEBI" id="CHEBI:57841"/>
    </ligand>
</feature>
<feature type="binding site" evidence="1">
    <location>
        <begin position="137"/>
        <end position="139"/>
    </location>
    <ligand>
        <name>2-[(2R,5Z)-2-carboxy-4-methylthiazol-5(2H)-ylidene]ethyl phosphate</name>
        <dbReference type="ChEBI" id="CHEBI:62899"/>
    </ligand>
</feature>
<feature type="binding site" evidence="1">
    <location>
        <position position="140"/>
    </location>
    <ligand>
        <name>4-amino-2-methyl-5-(diphosphooxymethyl)pyrimidine</name>
        <dbReference type="ChEBI" id="CHEBI:57841"/>
    </ligand>
</feature>
<feature type="binding site" evidence="1">
    <location>
        <position position="173"/>
    </location>
    <ligand>
        <name>2-[(2R,5Z)-2-carboxy-4-methylthiazol-5(2H)-ylidene]ethyl phosphate</name>
        <dbReference type="ChEBI" id="CHEBI:62899"/>
    </ligand>
</feature>
<feature type="binding site" evidence="1">
    <location>
        <begin position="193"/>
        <end position="194"/>
    </location>
    <ligand>
        <name>2-[(2R,5Z)-2-carboxy-4-methylthiazol-5(2H)-ylidene]ethyl phosphate</name>
        <dbReference type="ChEBI" id="CHEBI:62899"/>
    </ligand>
</feature>
<sequence>MKTLRFPAGLYGITPEWDDTDRLLAAVRAAAAGGMTALQLRRKLADERLRAAQARALAPLCRELGVVFLVNDHWKLALDVGADGAHLGRDDADPATVRAQAGAGLLLGVSCYNDLRRADALLAAGADYVAFGTVFASPTKPEAVHAPLQTLTEARARVLACPAPRPAVVAIGGITPANVSQVAQAGADSAAVISGLFEAPDIQAAARACAAAFSVNP</sequence>
<organism>
    <name type="scientific">Bordetella parapertussis (strain 12822 / ATCC BAA-587 / NCTC 13253)</name>
    <dbReference type="NCBI Taxonomy" id="257311"/>
    <lineage>
        <taxon>Bacteria</taxon>
        <taxon>Pseudomonadati</taxon>
        <taxon>Pseudomonadota</taxon>
        <taxon>Betaproteobacteria</taxon>
        <taxon>Burkholderiales</taxon>
        <taxon>Alcaligenaceae</taxon>
        <taxon>Bordetella</taxon>
    </lineage>
</organism>
<comment type="function">
    <text evidence="1">Condenses 4-methyl-5-(beta-hydroxyethyl)thiazole monophosphate (THZ-P) and 2-methyl-4-amino-5-hydroxymethyl pyrimidine pyrophosphate (HMP-PP) to form thiamine monophosphate (TMP).</text>
</comment>
<comment type="catalytic activity">
    <reaction evidence="1">
        <text>2-[(2R,5Z)-2-carboxy-4-methylthiazol-5(2H)-ylidene]ethyl phosphate + 4-amino-2-methyl-5-(diphosphooxymethyl)pyrimidine + 2 H(+) = thiamine phosphate + CO2 + diphosphate</text>
        <dbReference type="Rhea" id="RHEA:47844"/>
        <dbReference type="ChEBI" id="CHEBI:15378"/>
        <dbReference type="ChEBI" id="CHEBI:16526"/>
        <dbReference type="ChEBI" id="CHEBI:33019"/>
        <dbReference type="ChEBI" id="CHEBI:37575"/>
        <dbReference type="ChEBI" id="CHEBI:57841"/>
        <dbReference type="ChEBI" id="CHEBI:62899"/>
        <dbReference type="EC" id="2.5.1.3"/>
    </reaction>
</comment>
<comment type="catalytic activity">
    <reaction evidence="1">
        <text>2-(2-carboxy-4-methylthiazol-5-yl)ethyl phosphate + 4-amino-2-methyl-5-(diphosphooxymethyl)pyrimidine + 2 H(+) = thiamine phosphate + CO2 + diphosphate</text>
        <dbReference type="Rhea" id="RHEA:47848"/>
        <dbReference type="ChEBI" id="CHEBI:15378"/>
        <dbReference type="ChEBI" id="CHEBI:16526"/>
        <dbReference type="ChEBI" id="CHEBI:33019"/>
        <dbReference type="ChEBI" id="CHEBI:37575"/>
        <dbReference type="ChEBI" id="CHEBI:57841"/>
        <dbReference type="ChEBI" id="CHEBI:62890"/>
        <dbReference type="EC" id="2.5.1.3"/>
    </reaction>
</comment>
<comment type="catalytic activity">
    <reaction evidence="1">
        <text>4-methyl-5-(2-phosphooxyethyl)-thiazole + 4-amino-2-methyl-5-(diphosphooxymethyl)pyrimidine + H(+) = thiamine phosphate + diphosphate</text>
        <dbReference type="Rhea" id="RHEA:22328"/>
        <dbReference type="ChEBI" id="CHEBI:15378"/>
        <dbReference type="ChEBI" id="CHEBI:33019"/>
        <dbReference type="ChEBI" id="CHEBI:37575"/>
        <dbReference type="ChEBI" id="CHEBI:57841"/>
        <dbReference type="ChEBI" id="CHEBI:58296"/>
        <dbReference type="EC" id="2.5.1.3"/>
    </reaction>
</comment>
<comment type="cofactor">
    <cofactor evidence="1">
        <name>Mg(2+)</name>
        <dbReference type="ChEBI" id="CHEBI:18420"/>
    </cofactor>
    <text evidence="1">Binds 1 Mg(2+) ion per subunit.</text>
</comment>
<comment type="pathway">
    <text evidence="1">Cofactor biosynthesis; thiamine diphosphate biosynthesis; thiamine phosphate from 4-amino-2-methyl-5-diphosphomethylpyrimidine and 4-methyl-5-(2-phosphoethyl)-thiazole: step 1/1.</text>
</comment>
<comment type="similarity">
    <text evidence="1">Belongs to the thiamine-phosphate synthase family.</text>
</comment>
<reference key="1">
    <citation type="journal article" date="2003" name="Nat. Genet.">
        <title>Comparative analysis of the genome sequences of Bordetella pertussis, Bordetella parapertussis and Bordetella bronchiseptica.</title>
        <authorList>
            <person name="Parkhill J."/>
            <person name="Sebaihia M."/>
            <person name="Preston A."/>
            <person name="Murphy L.D."/>
            <person name="Thomson N.R."/>
            <person name="Harris D.E."/>
            <person name="Holden M.T.G."/>
            <person name="Churcher C.M."/>
            <person name="Bentley S.D."/>
            <person name="Mungall K.L."/>
            <person name="Cerdeno-Tarraga A.-M."/>
            <person name="Temple L."/>
            <person name="James K.D."/>
            <person name="Harris B."/>
            <person name="Quail M.A."/>
            <person name="Achtman M."/>
            <person name="Atkin R."/>
            <person name="Baker S."/>
            <person name="Basham D."/>
            <person name="Bason N."/>
            <person name="Cherevach I."/>
            <person name="Chillingworth T."/>
            <person name="Collins M."/>
            <person name="Cronin A."/>
            <person name="Davis P."/>
            <person name="Doggett J."/>
            <person name="Feltwell T."/>
            <person name="Goble A."/>
            <person name="Hamlin N."/>
            <person name="Hauser H."/>
            <person name="Holroyd S."/>
            <person name="Jagels K."/>
            <person name="Leather S."/>
            <person name="Moule S."/>
            <person name="Norberczak H."/>
            <person name="O'Neil S."/>
            <person name="Ormond D."/>
            <person name="Price C."/>
            <person name="Rabbinowitsch E."/>
            <person name="Rutter S."/>
            <person name="Sanders M."/>
            <person name="Saunders D."/>
            <person name="Seeger K."/>
            <person name="Sharp S."/>
            <person name="Simmonds M."/>
            <person name="Skelton J."/>
            <person name="Squares R."/>
            <person name="Squares S."/>
            <person name="Stevens K."/>
            <person name="Unwin L."/>
            <person name="Whitehead S."/>
            <person name="Barrell B.G."/>
            <person name="Maskell D.J."/>
        </authorList>
    </citation>
    <scope>NUCLEOTIDE SEQUENCE [LARGE SCALE GENOMIC DNA]</scope>
    <source>
        <strain>12822 / ATCC BAA-587 / NCTC 13253</strain>
    </source>
</reference>